<feature type="chain" id="PRO_0000348066" description="Alpha-tubulin N-acetyltransferase 1">
    <location>
        <begin position="1"/>
        <end position="421"/>
    </location>
</feature>
<feature type="domain" description="N-acetyltransferase" evidence="3">
    <location>
        <begin position="1"/>
        <end position="190"/>
    </location>
</feature>
<feature type="region of interest" description="Disordered" evidence="4">
    <location>
        <begin position="196"/>
        <end position="235"/>
    </location>
</feature>
<feature type="region of interest" description="Disordered" evidence="4">
    <location>
        <begin position="252"/>
        <end position="284"/>
    </location>
</feature>
<feature type="region of interest" description="Disordered" evidence="4">
    <location>
        <begin position="306"/>
        <end position="402"/>
    </location>
</feature>
<feature type="compositionally biased region" description="Low complexity" evidence="4">
    <location>
        <begin position="209"/>
        <end position="221"/>
    </location>
</feature>
<feature type="compositionally biased region" description="Basic and acidic residues" evidence="4">
    <location>
        <begin position="226"/>
        <end position="235"/>
    </location>
</feature>
<feature type="compositionally biased region" description="Polar residues" evidence="4">
    <location>
        <begin position="342"/>
        <end position="354"/>
    </location>
</feature>
<feature type="compositionally biased region" description="Basic and acidic residues" evidence="4">
    <location>
        <begin position="355"/>
        <end position="367"/>
    </location>
</feature>
<feature type="binding site" evidence="3 7 8 11">
    <location>
        <begin position="124"/>
        <end position="137"/>
    </location>
    <ligand>
        <name>acetyl-CoA</name>
        <dbReference type="ChEBI" id="CHEBI:57288"/>
    </ligand>
</feature>
<feature type="binding site" evidence="3 7 8 11">
    <location>
        <begin position="160"/>
        <end position="169"/>
    </location>
    <ligand>
        <name>acetyl-CoA</name>
        <dbReference type="ChEBI" id="CHEBI:57288"/>
    </ligand>
</feature>
<feature type="site" description="Crucial for catalytic activity" evidence="3 8">
    <location>
        <position position="58"/>
    </location>
</feature>
<feature type="modified residue" description="N6-acetyllysine; by autocatalysis" evidence="2 3">
    <location>
        <position position="56"/>
    </location>
</feature>
<feature type="modified residue" description="N6-acetyllysine; by autocatalysis" evidence="2 3">
    <location>
        <position position="146"/>
    </location>
</feature>
<feature type="modified residue" description="N6-acetyllysine; by autocatalysis" evidence="2 3">
    <location>
        <position position="233"/>
    </location>
</feature>
<feature type="modified residue" description="N6-acetyllysine; by autocatalysis" evidence="2 3">
    <location>
        <position position="244"/>
    </location>
</feature>
<feature type="modified residue" description="Phosphoserine" evidence="1">
    <location>
        <position position="272"/>
    </location>
</feature>
<feature type="modified residue" description="Phosphoserine" evidence="24">
    <location>
        <position position="276"/>
    </location>
</feature>
<feature type="modified residue" description="Asymmetric dimethylarginine" evidence="2">
    <location>
        <position position="305"/>
    </location>
</feature>
<feature type="modified residue" description="Phosphoserine" evidence="24">
    <location>
        <position position="315"/>
    </location>
</feature>
<feature type="modified residue" description="Omega-N-methylarginine" evidence="25">
    <location>
        <position position="323"/>
    </location>
</feature>
<feature type="splice variant" id="VSP_052899" description="In isoform 2." evidence="13 15">
    <location>
        <begin position="1"/>
        <end position="12"/>
    </location>
</feature>
<feature type="splice variant" id="VSP_052900" description="In isoform 2." evidence="13 15">
    <original>ERITVLDQHLRPPARRPGTTTPAR</original>
    <variation>MWLTWPFCFLTITLREEGVCHLES</variation>
    <location>
        <begin position="13"/>
        <end position="36"/>
    </location>
</feature>
<feature type="splice variant" id="VSP_052901" description="In isoform 3, isoform 6 and isoform 7." evidence="13 15">
    <original>RPPAPSLRATRHSRAAAVDPTPAA</original>
    <variation>P</variation>
    <location>
        <begin position="195"/>
        <end position="218"/>
    </location>
</feature>
<feature type="splice variant" id="VSP_052902" description="In isoform 4 and isoform 6." evidence="12 13 16">
    <original>RGTPPGLVAQS</original>
    <variation>SSLPRSEESRY</variation>
    <location>
        <begin position="323"/>
        <end position="333"/>
    </location>
</feature>
<feature type="splice variant" id="VSP_052903" description="In isoform 5 and isoform 7." evidence="13 14 15">
    <location>
        <begin position="324"/>
        <end position="421"/>
    </location>
</feature>
<feature type="splice variant" id="VSP_052904" description="In isoform 4 and isoform 6." evidence="12 13 16">
    <location>
        <begin position="334"/>
        <end position="421"/>
    </location>
</feature>
<feature type="mutagenesis site" description="Loss of acetyltransferase activity." evidence="8">
    <original>Q</original>
    <variation>A</variation>
    <location>
        <position position="58"/>
    </location>
</feature>
<feature type="mutagenesis site" description="No effect on catalytic activity." evidence="8">
    <original>S</original>
    <variation>A</variation>
    <location>
        <position position="61"/>
    </location>
</feature>
<feature type="mutagenesis site" description="Strong reduction in acetyltransferase activity." evidence="7 8 11">
    <original>I</original>
    <variation>A</variation>
    <location>
        <position position="64"/>
    </location>
</feature>
<feature type="mutagenesis site" description="Strong reduction in acetyltransferase activity." evidence="7">
    <original>R</original>
    <variation>A</variation>
    <location>
        <position position="69"/>
    </location>
</feature>
<feature type="mutagenesis site" description="Strong reduction in acetyltransferase activity." evidence="11">
    <original>K</original>
    <variation>A</variation>
    <location>
        <position position="102"/>
    </location>
</feature>
<feature type="mutagenesis site" description="Reduced activity." evidence="7">
    <original>F</original>
    <variation>A</variation>
    <location>
        <position position="105"/>
    </location>
</feature>
<feature type="mutagenesis site" description="Reduced activity." evidence="7">
    <original>V</original>
    <variation>A</variation>
    <location>
        <position position="106"/>
    </location>
</feature>
<feature type="mutagenesis site" description="Reduced activity." evidence="7">
    <original>L</original>
    <variation>A</variation>
    <location>
        <position position="107"/>
    </location>
</feature>
<feature type="mutagenesis site" description="Reduced activity." evidence="7">
    <original>D</original>
    <variation>A</variation>
    <location>
        <position position="108"/>
    </location>
</feature>
<feature type="mutagenesis site" description="Slight increase in activity." evidence="7">
    <original>D</original>
    <variation>A</variation>
    <location>
        <position position="109"/>
    </location>
</feature>
<feature type="mutagenesis site" description="Marginal increase in activity." evidence="7">
    <original>D</original>
    <variation>R</variation>
    <location>
        <position position="109"/>
    </location>
</feature>
<feature type="mutagenesis site" description="2-fold increase in activity." evidence="7">
    <original>E</original>
    <variation>A</variation>
    <location>
        <position position="111"/>
    </location>
</feature>
<feature type="mutagenesis site" description="No effect on catalytic activity." evidence="7">
    <original>E</original>
    <variation>R</variation>
    <location>
        <position position="111"/>
    </location>
</feature>
<feature type="mutagenesis site" description="Reduced activity." evidence="7">
    <original>E</original>
    <variation>A</variation>
    <location>
        <position position="115"/>
    </location>
</feature>
<feature type="mutagenesis site" description="Reduced activity." evidence="7">
    <original>E</original>
    <variation>A</variation>
    <location>
        <position position="117"/>
    </location>
</feature>
<feature type="mutagenesis site" description="Strong reduction in microtubule acetylation." evidence="7">
    <original>C</original>
    <variation>A</variation>
    <variation>S</variation>
    <location>
        <position position="120"/>
    </location>
</feature>
<feature type="mutagenesis site" description="Strong reduction in microtubule acetylation." evidence="6 7">
    <original>D</original>
    <variation>E</variation>
    <variation>N</variation>
    <location>
        <position position="157"/>
    </location>
</feature>
<feature type="mutagenesis site" description="20% of wild-type acetyltransferase activity." evidence="8 11">
    <original>R</original>
    <variation>A</variation>
    <location>
        <position position="158"/>
    </location>
</feature>
<feature type="mutagenesis site" description="Strong reduction in activity." evidence="7">
    <original>N</original>
    <variation>A</variation>
    <location>
        <position position="182"/>
    </location>
</feature>
<feature type="mutagenesis site" description="Strong reduction in activity." evidence="7">
    <original>F</original>
    <variation>A</variation>
    <location>
        <position position="183"/>
    </location>
</feature>
<feature type="helix" evidence="27">
    <location>
        <begin position="7"/>
        <end position="10"/>
    </location>
</feature>
<feature type="strand" evidence="27">
    <location>
        <begin position="13"/>
        <end position="18"/>
    </location>
</feature>
<feature type="helix" evidence="27">
    <location>
        <begin position="36"/>
        <end position="57"/>
    </location>
</feature>
<feature type="helix" evidence="27">
    <location>
        <begin position="67"/>
        <end position="72"/>
    </location>
</feature>
<feature type="strand" evidence="27">
    <location>
        <begin position="76"/>
        <end position="81"/>
    </location>
</feature>
<feature type="strand" evidence="27">
    <location>
        <begin position="93"/>
        <end position="101"/>
    </location>
</feature>
<feature type="strand" evidence="27">
    <location>
        <begin position="104"/>
        <end position="107"/>
    </location>
</feature>
<feature type="strand" evidence="28">
    <location>
        <begin position="109"/>
        <end position="111"/>
    </location>
</feature>
<feature type="strand" evidence="27">
    <location>
        <begin position="113"/>
        <end position="116"/>
    </location>
</feature>
<feature type="strand" evidence="27">
    <location>
        <begin position="119"/>
        <end position="126"/>
    </location>
</feature>
<feature type="helix" evidence="27">
    <location>
        <begin position="128"/>
        <end position="130"/>
    </location>
</feature>
<feature type="helix" evidence="27">
    <location>
        <begin position="135"/>
        <end position="147"/>
    </location>
</feature>
<feature type="helix" evidence="27">
    <location>
        <begin position="151"/>
        <end position="153"/>
    </location>
</feature>
<feature type="strand" evidence="27">
    <location>
        <begin position="155"/>
        <end position="158"/>
    </location>
</feature>
<feature type="helix" evidence="27">
    <location>
        <begin position="161"/>
        <end position="171"/>
    </location>
</feature>
<feature type="strand" evidence="27">
    <location>
        <begin position="182"/>
        <end position="184"/>
    </location>
</feature>
<feature type="turn" evidence="26">
    <location>
        <begin position="187"/>
        <end position="190"/>
    </location>
</feature>
<feature type="helix" evidence="26">
    <location>
        <begin position="191"/>
        <end position="194"/>
    </location>
</feature>
<organism>
    <name type="scientific">Homo sapiens</name>
    <name type="common">Human</name>
    <dbReference type="NCBI Taxonomy" id="9606"/>
    <lineage>
        <taxon>Eukaryota</taxon>
        <taxon>Metazoa</taxon>
        <taxon>Chordata</taxon>
        <taxon>Craniata</taxon>
        <taxon>Vertebrata</taxon>
        <taxon>Euteleostomi</taxon>
        <taxon>Mammalia</taxon>
        <taxon>Eutheria</taxon>
        <taxon>Euarchontoglires</taxon>
        <taxon>Primates</taxon>
        <taxon>Haplorrhini</taxon>
        <taxon>Catarrhini</taxon>
        <taxon>Hominidae</taxon>
        <taxon>Homo</taxon>
    </lineage>
</organism>
<dbReference type="EC" id="2.3.1.108" evidence="3 5 7 11"/>
<dbReference type="EMBL" id="AB075512">
    <property type="protein sequence ID" value="BAE45758.1"/>
    <property type="molecule type" value="mRNA"/>
</dbReference>
<dbReference type="EMBL" id="AK023220">
    <property type="protein sequence ID" value="BAB14472.1"/>
    <property type="molecule type" value="mRNA"/>
</dbReference>
<dbReference type="EMBL" id="AL662800">
    <property type="status" value="NOT_ANNOTATED_CDS"/>
    <property type="molecule type" value="Genomic_DNA"/>
</dbReference>
<dbReference type="EMBL" id="AL732442">
    <property type="status" value="NOT_ANNOTATED_CDS"/>
    <property type="molecule type" value="Genomic_DNA"/>
</dbReference>
<dbReference type="EMBL" id="AL845353">
    <property type="status" value="NOT_ANNOTATED_CDS"/>
    <property type="molecule type" value="Genomic_DNA"/>
</dbReference>
<dbReference type="EMBL" id="BX119957">
    <property type="status" value="NOT_ANNOTATED_CDS"/>
    <property type="molecule type" value="Genomic_DNA"/>
</dbReference>
<dbReference type="EMBL" id="BX908728">
    <property type="status" value="NOT_ANNOTATED_CDS"/>
    <property type="molecule type" value="Genomic_DNA"/>
</dbReference>
<dbReference type="EMBL" id="CR753328">
    <property type="status" value="NOT_ANNOTATED_CDS"/>
    <property type="molecule type" value="Genomic_DNA"/>
</dbReference>
<dbReference type="EMBL" id="CR759778">
    <property type="status" value="NOT_ANNOTATED_CDS"/>
    <property type="molecule type" value="Genomic_DNA"/>
</dbReference>
<dbReference type="EMBL" id="CH471081">
    <property type="protein sequence ID" value="EAX03306.1"/>
    <property type="molecule type" value="Genomic_DNA"/>
</dbReference>
<dbReference type="EMBL" id="CH471081">
    <property type="protein sequence ID" value="EAX03307.1"/>
    <property type="molecule type" value="Genomic_DNA"/>
</dbReference>
<dbReference type="EMBL" id="BC006105">
    <property type="protein sequence ID" value="AAH06105.1"/>
    <property type="molecule type" value="mRNA"/>
</dbReference>
<dbReference type="EMBL" id="BC047303">
    <property type="protein sequence ID" value="AAH47303.1"/>
    <property type="molecule type" value="mRNA"/>
</dbReference>
<dbReference type="EMBL" id="AL833858">
    <property type="protein sequence ID" value="CAD38717.1"/>
    <property type="molecule type" value="mRNA"/>
</dbReference>
<dbReference type="CCDS" id="CCDS4683.2">
    <molecule id="Q5SQI0-4"/>
</dbReference>
<dbReference type="CCDS" id="CCDS54978.1">
    <molecule id="Q5SQI0-2"/>
</dbReference>
<dbReference type="CCDS" id="CCDS59002.1">
    <molecule id="Q5SQI0-6"/>
</dbReference>
<dbReference type="CCDS" id="CCDS83072.1">
    <molecule id="Q5SQI0-5"/>
</dbReference>
<dbReference type="CCDS" id="CCDS83073.1">
    <molecule id="Q5SQI0-7"/>
</dbReference>
<dbReference type="RefSeq" id="NP_001026892.1">
    <molecule id="Q5SQI0-2"/>
    <property type="nucleotide sequence ID" value="NM_001031722.4"/>
</dbReference>
<dbReference type="RefSeq" id="NP_001177653.1">
    <property type="nucleotide sequence ID" value="NM_001190724.2"/>
</dbReference>
<dbReference type="RefSeq" id="NP_001241881.1">
    <molecule id="Q5SQI0-6"/>
    <property type="nucleotide sequence ID" value="NM_001254952.4"/>
</dbReference>
<dbReference type="RefSeq" id="NP_001305691.1">
    <molecule id="Q5SQI0-7"/>
    <property type="nucleotide sequence ID" value="NM_001318762.3"/>
</dbReference>
<dbReference type="RefSeq" id="NP_001305692.1">
    <molecule id="Q5SQI0-5"/>
    <property type="nucleotide sequence ID" value="NM_001318763.3"/>
</dbReference>
<dbReference type="RefSeq" id="NP_001399996.1">
    <molecule id="Q5SQI0-1"/>
    <property type="nucleotide sequence ID" value="NM_001413067.1"/>
</dbReference>
<dbReference type="RefSeq" id="NP_079185.2">
    <molecule id="Q5SQI0-4"/>
    <property type="nucleotide sequence ID" value="NM_024909.5"/>
</dbReference>
<dbReference type="PDB" id="3VWD">
    <property type="method" value="X-ray"/>
    <property type="resolution" value="1.25 A"/>
    <property type="chains" value="A=1-194"/>
</dbReference>
<dbReference type="PDB" id="3VWE">
    <property type="method" value="X-ray"/>
    <property type="resolution" value="1.96 A"/>
    <property type="chains" value="A=1-194"/>
</dbReference>
<dbReference type="PDB" id="4B5O">
    <property type="method" value="X-ray"/>
    <property type="resolution" value="1.05 A"/>
    <property type="chains" value="A=1-196"/>
</dbReference>
<dbReference type="PDB" id="4B5P">
    <property type="method" value="X-ray"/>
    <property type="resolution" value="1.60 A"/>
    <property type="chains" value="A/B=1-196"/>
</dbReference>
<dbReference type="PDB" id="4GS4">
    <property type="method" value="X-ray"/>
    <property type="resolution" value="2.11 A"/>
    <property type="chains" value="A=2-236"/>
</dbReference>
<dbReference type="PDB" id="4IF5">
    <property type="method" value="X-ray"/>
    <property type="resolution" value="1.70 A"/>
    <property type="chains" value="A=1-193"/>
</dbReference>
<dbReference type="PDB" id="4PK2">
    <property type="method" value="X-ray"/>
    <property type="resolution" value="1.35 A"/>
    <property type="chains" value="A=1-194"/>
</dbReference>
<dbReference type="PDB" id="4PK3">
    <property type="method" value="X-ray"/>
    <property type="resolution" value="1.35 A"/>
    <property type="chains" value="A=1-194"/>
</dbReference>
<dbReference type="PDB" id="4U9Y">
    <property type="method" value="X-ray"/>
    <property type="resolution" value="2.20 A"/>
    <property type="chains" value="A=1-194"/>
</dbReference>
<dbReference type="PDB" id="4U9Z">
    <property type="method" value="X-ray"/>
    <property type="resolution" value="1.80 A"/>
    <property type="chains" value="A=1-194"/>
</dbReference>
<dbReference type="PDBsum" id="3VWD"/>
<dbReference type="PDBsum" id="3VWE"/>
<dbReference type="PDBsum" id="4B5O"/>
<dbReference type="PDBsum" id="4B5P"/>
<dbReference type="PDBsum" id="4GS4"/>
<dbReference type="PDBsum" id="4IF5"/>
<dbReference type="PDBsum" id="4PK2"/>
<dbReference type="PDBsum" id="4PK3"/>
<dbReference type="PDBsum" id="4U9Y"/>
<dbReference type="PDBsum" id="4U9Z"/>
<dbReference type="SMR" id="Q5SQI0"/>
<dbReference type="BioGRID" id="123036">
    <property type="interactions" value="22"/>
</dbReference>
<dbReference type="FunCoup" id="Q5SQI0">
    <property type="interactions" value="507"/>
</dbReference>
<dbReference type="IntAct" id="Q5SQI0">
    <property type="interactions" value="17"/>
</dbReference>
<dbReference type="STRING" id="9606.ENSP00000327832"/>
<dbReference type="GlyGen" id="Q5SQI0">
    <property type="glycosylation" value="1 site"/>
</dbReference>
<dbReference type="iPTMnet" id="Q5SQI0"/>
<dbReference type="PhosphoSitePlus" id="Q5SQI0"/>
<dbReference type="BioMuta" id="ATAT1"/>
<dbReference type="DMDM" id="74743537"/>
<dbReference type="jPOST" id="Q5SQI0"/>
<dbReference type="MassIVE" id="Q5SQI0"/>
<dbReference type="PaxDb" id="9606-ENSP00000327832"/>
<dbReference type="PeptideAtlas" id="Q5SQI0"/>
<dbReference type="ProteomicsDB" id="63801">
    <molecule id="Q5SQI0-1"/>
</dbReference>
<dbReference type="ProteomicsDB" id="63802">
    <molecule id="Q5SQI0-2"/>
</dbReference>
<dbReference type="ProteomicsDB" id="63803">
    <molecule id="Q5SQI0-3"/>
</dbReference>
<dbReference type="ProteomicsDB" id="63804">
    <molecule id="Q5SQI0-4"/>
</dbReference>
<dbReference type="ProteomicsDB" id="63805">
    <molecule id="Q5SQI0-5"/>
</dbReference>
<dbReference type="ProteomicsDB" id="63806">
    <molecule id="Q5SQI0-6"/>
</dbReference>
<dbReference type="ProteomicsDB" id="63807">
    <molecule id="Q5SQI0-7"/>
</dbReference>
<dbReference type="Pumba" id="Q5SQI0"/>
<dbReference type="ABCD" id="Q5SQI0">
    <property type="antibodies" value="1 sequenced antibody"/>
</dbReference>
<dbReference type="Antibodypedia" id="26411">
    <property type="antibodies" value="133 antibodies from 22 providers"/>
</dbReference>
<dbReference type="DNASU" id="79969"/>
<dbReference type="Ensembl" id="ENST00000318999.11">
    <molecule id="Q5SQI0-7"/>
    <property type="protein sequence ID" value="ENSP00000324222.7"/>
    <property type="gene ID" value="ENSG00000137343.18"/>
</dbReference>
<dbReference type="Ensembl" id="ENST00000319027.9">
    <molecule id="Q5SQI0-6"/>
    <property type="protein sequence ID" value="ENSP00000324459.5"/>
    <property type="gene ID" value="ENSG00000137343.18"/>
</dbReference>
<dbReference type="Ensembl" id="ENST00000329992.12">
    <molecule id="Q5SQI0-4"/>
    <property type="protein sequence ID" value="ENSP00000332374.8"/>
    <property type="gene ID" value="ENSG00000137343.18"/>
</dbReference>
<dbReference type="Ensembl" id="ENST00000330083.6">
    <molecule id="Q5SQI0-2"/>
    <property type="protein sequence ID" value="ENSP00000327832.5"/>
    <property type="gene ID" value="ENSG00000137343.18"/>
</dbReference>
<dbReference type="Ensembl" id="ENST00000376483.8">
    <molecule id="Q5SQI0-5"/>
    <property type="protein sequence ID" value="ENSP00000365666.4"/>
    <property type="gene ID" value="ENSG00000137343.18"/>
</dbReference>
<dbReference type="Ensembl" id="ENST00000376485.9">
    <molecule id="Q5SQI0-1"/>
    <property type="protein sequence ID" value="ENSP00000365668.4"/>
    <property type="gene ID" value="ENSG00000137343.18"/>
</dbReference>
<dbReference type="Ensembl" id="ENST00000383582.4">
    <molecule id="Q5SQI0-2"/>
    <property type="protein sequence ID" value="ENSP00000373076.4"/>
    <property type="gene ID" value="ENSG00000206488.10"/>
</dbReference>
<dbReference type="Ensembl" id="ENST00000383583.8">
    <molecule id="Q5SQI0-4"/>
    <property type="protein sequence ID" value="ENSP00000373077.4"/>
    <property type="gene ID" value="ENSG00000206488.10"/>
</dbReference>
<dbReference type="Ensembl" id="ENST00000383584.6">
    <molecule id="Q5SQI0-7"/>
    <property type="protein sequence ID" value="ENSP00000373078.2"/>
    <property type="gene ID" value="ENSG00000206488.10"/>
</dbReference>
<dbReference type="Ensembl" id="ENST00000383585.8">
    <molecule id="Q5SQI0-1"/>
    <property type="protein sequence ID" value="ENSP00000373079.4"/>
    <property type="gene ID" value="ENSG00000206488.10"/>
</dbReference>
<dbReference type="Ensembl" id="ENST00000400575.5">
    <molecule id="Q5SQI0-5"/>
    <property type="protein sequence ID" value="ENSP00000383419.1"/>
    <property type="gene ID" value="ENSG00000206488.10"/>
</dbReference>
<dbReference type="Ensembl" id="ENST00000400576.5">
    <molecule id="Q5SQI0-6"/>
    <property type="protein sequence ID" value="ENSP00000383420.1"/>
    <property type="gene ID" value="ENSG00000206488.10"/>
</dbReference>
<dbReference type="Ensembl" id="ENST00000411724.5">
    <molecule id="Q5SQI0-5"/>
    <property type="protein sequence ID" value="ENSP00000388617.1"/>
    <property type="gene ID" value="ENSG00000234549.8"/>
</dbReference>
<dbReference type="Ensembl" id="ENST00000416435.2">
    <molecule id="Q5SQI0-2"/>
    <property type="protein sequence ID" value="ENSP00000412993.2"/>
    <property type="gene ID" value="ENSG00000235658.8"/>
</dbReference>
<dbReference type="Ensembl" id="ENST00000416917.5">
    <molecule id="Q5SQI0-7"/>
    <property type="protein sequence ID" value="ENSP00000402998.1"/>
    <property type="gene ID" value="ENSG00000234549.8"/>
</dbReference>
<dbReference type="Ensembl" id="ENST00000417183.5">
    <molecule id="Q5SQI0-7"/>
    <property type="protein sequence ID" value="ENSP00000393868.1"/>
    <property type="gene ID" value="ENSG00000231257.8"/>
</dbReference>
<dbReference type="Ensembl" id="ENST00000418248.5">
    <molecule id="Q5SQI0-5"/>
    <property type="protein sequence ID" value="ENSP00000411362.1"/>
    <property type="gene ID" value="ENSG00000231257.8"/>
</dbReference>
<dbReference type="Ensembl" id="ENST00000420586.6">
    <molecule id="Q5SQI0-1"/>
    <property type="protein sequence ID" value="ENSP00000411050.2"/>
    <property type="gene ID" value="ENSG00000231257.8"/>
</dbReference>
<dbReference type="Ensembl" id="ENST00000423338.5">
    <molecule id="Q5SQI0-7"/>
    <property type="protein sequence ID" value="ENSP00000415000.1"/>
    <property type="gene ID" value="ENSG00000223752.8"/>
</dbReference>
<dbReference type="Ensembl" id="ENST00000423654.5">
    <molecule id="Q5SQI0-5"/>
    <property type="protein sequence ID" value="ENSP00000403142.1"/>
    <property type="gene ID" value="ENSG00000235658.8"/>
</dbReference>
<dbReference type="Ensembl" id="ENST00000424121.5">
    <molecule id="Q5SQI0-6"/>
    <property type="protein sequence ID" value="ENSP00000412198.1"/>
    <property type="gene ID" value="ENSG00000223752.8"/>
</dbReference>
<dbReference type="Ensembl" id="ENST00000425448.2">
    <molecule id="Q5SQI0-2"/>
    <property type="protein sequence ID" value="ENSP00000391244.2"/>
    <property type="gene ID" value="ENSG00000223752.8"/>
</dbReference>
<dbReference type="Ensembl" id="ENST00000428764.6">
    <molecule id="Q5SQI0-4"/>
    <property type="protein sequence ID" value="ENSP00000399509.2"/>
    <property type="gene ID" value="ENSG00000235658.8"/>
</dbReference>
<dbReference type="Ensembl" id="ENST00000430611.5">
    <molecule id="Q5SQI0-6"/>
    <property type="protein sequence ID" value="ENSP00000409296.1"/>
    <property type="gene ID" value="ENSG00000235658.8"/>
</dbReference>
<dbReference type="Ensembl" id="ENST00000432356.6">
    <molecule id="Q5SQI0-1"/>
    <property type="protein sequence ID" value="ENSP00000416994.2"/>
    <property type="gene ID" value="ENSG00000234549.8"/>
</dbReference>
<dbReference type="Ensembl" id="ENST00000432643.6">
    <molecule id="Q5SQI0-2"/>
    <property type="protein sequence ID" value="ENSP00000416925.2"/>
    <property type="gene ID" value="ENSG00000231257.8"/>
</dbReference>
<dbReference type="Ensembl" id="ENST00000442844.6">
    <molecule id="Q5SQI0-1"/>
    <property type="protein sequence ID" value="ENSP00000394914.2"/>
    <property type="gene ID" value="ENSG00000235658.8"/>
</dbReference>
<dbReference type="Ensembl" id="ENST00000443114.5">
    <molecule id="Q5SQI0-7"/>
    <property type="protein sequence ID" value="ENSP00000405656.1"/>
    <property type="gene ID" value="ENSG00000229061.8"/>
</dbReference>
<dbReference type="Ensembl" id="ENST00000443391.5">
    <molecule id="Q5SQI0-6"/>
    <property type="protein sequence ID" value="ENSP00000406071.1"/>
    <property type="gene ID" value="ENSG00000229061.8"/>
</dbReference>
<dbReference type="Ensembl" id="ENST00000445486.6">
    <molecule id="Q5SQI0-1"/>
    <property type="protein sequence ID" value="ENSP00000398422.2"/>
    <property type="gene ID" value="ENSG00000223752.8"/>
</dbReference>
<dbReference type="Ensembl" id="ENST00000445973.5">
    <molecule id="Q5SQI0-6"/>
    <property type="protein sequence ID" value="ENSP00000415408.1"/>
    <property type="gene ID" value="ENSG00000231257.8"/>
</dbReference>
<dbReference type="Ensembl" id="ENST00000446100.5">
    <molecule id="Q5SQI0-5"/>
    <property type="protein sequence ID" value="ENSP00000393269.1"/>
    <property type="gene ID" value="ENSG00000229061.8"/>
</dbReference>
<dbReference type="Ensembl" id="ENST00000448670.2">
    <molecule id="Q5SQI0-2"/>
    <property type="protein sequence ID" value="ENSP00000389129.2"/>
    <property type="gene ID" value="ENSG00000229061.8"/>
</dbReference>
<dbReference type="Ensembl" id="ENST00000449905.5">
    <molecule id="Q5SQI0-7"/>
    <property type="protein sequence ID" value="ENSP00000399529.1"/>
    <property type="gene ID" value="ENSG00000235658.8"/>
</dbReference>
<dbReference type="Ensembl" id="ENST00000450003.6">
    <molecule id="Q5SQI0-4"/>
    <property type="protein sequence ID" value="ENSP00000406421.2"/>
    <property type="gene ID" value="ENSG00000223752.8"/>
</dbReference>
<dbReference type="Ensembl" id="ENST00000450220.2">
    <molecule id="Q5SQI0-4"/>
    <property type="protein sequence ID" value="ENSP00000405036.2"/>
    <property type="gene ID" value="ENSG00000231257.8"/>
</dbReference>
<dbReference type="Ensembl" id="ENST00000454794.6">
    <molecule id="Q5SQI0-1"/>
    <property type="protein sequence ID" value="ENSP00000409067.2"/>
    <property type="gene ID" value="ENSG00000229061.8"/>
</dbReference>
<dbReference type="Ensembl" id="ENST00000454987.5">
    <molecule id="Q5SQI0-6"/>
    <property type="protein sequence ID" value="ENSP00000410415.1"/>
    <property type="gene ID" value="ENSG00000234549.8"/>
</dbReference>
<dbReference type="Ensembl" id="ENST00000456215.6">
    <molecule id="Q5SQI0-4"/>
    <property type="protein sequence ID" value="ENSP00000399452.2"/>
    <property type="gene ID" value="ENSG00000234549.8"/>
</dbReference>
<dbReference type="Ensembl" id="ENST00000456704.6">
    <molecule id="Q5SQI0-4"/>
    <property type="protein sequence ID" value="ENSP00000394357.2"/>
    <property type="gene ID" value="ENSG00000229061.8"/>
</dbReference>
<dbReference type="Ensembl" id="ENST00000457161.5">
    <molecule id="Q5SQI0-5"/>
    <property type="protein sequence ID" value="ENSP00000388171.1"/>
    <property type="gene ID" value="ENSG00000223752.8"/>
</dbReference>
<dbReference type="Ensembl" id="ENST00000457334.2">
    <molecule id="Q5SQI0-2"/>
    <property type="protein sequence ID" value="ENSP00000398374.2"/>
    <property type="gene ID" value="ENSG00000234549.8"/>
</dbReference>
<dbReference type="GeneID" id="79969"/>
<dbReference type="KEGG" id="hsa:79969"/>
<dbReference type="MANE-Select" id="ENST00000376485.9">
    <property type="protein sequence ID" value="ENSP00000365668.4"/>
    <property type="RefSeq nucleotide sequence ID" value="NM_001413067.1"/>
    <property type="RefSeq protein sequence ID" value="NP_001399996.1"/>
</dbReference>
<dbReference type="UCSC" id="uc003nqr.5">
    <molecule id="Q5SQI0-1"/>
    <property type="organism name" value="human"/>
</dbReference>
<dbReference type="AGR" id="HGNC:21186"/>
<dbReference type="CTD" id="79969"/>
<dbReference type="DisGeNET" id="79969"/>
<dbReference type="GeneCards" id="ATAT1"/>
<dbReference type="HGNC" id="HGNC:21186">
    <property type="gene designation" value="ATAT1"/>
</dbReference>
<dbReference type="HPA" id="ENSG00000137343">
    <property type="expression patterns" value="Tissue enhanced (brain)"/>
</dbReference>
<dbReference type="MIM" id="615556">
    <property type="type" value="gene"/>
</dbReference>
<dbReference type="neXtProt" id="NX_Q5SQI0"/>
<dbReference type="OpenTargets" id="ENSG00000137343"/>
<dbReference type="PharmGKB" id="PA134948212"/>
<dbReference type="VEuPathDB" id="HostDB:ENSG00000137343"/>
<dbReference type="eggNOG" id="KOG4601">
    <property type="taxonomic scope" value="Eukaryota"/>
</dbReference>
<dbReference type="GeneTree" id="ENSGT00390000008276"/>
<dbReference type="HOGENOM" id="CLU_025013_0_0_1"/>
<dbReference type="InParanoid" id="Q5SQI0"/>
<dbReference type="OMA" id="SRHMDIR"/>
<dbReference type="OrthoDB" id="447510at2759"/>
<dbReference type="PAN-GO" id="Q5SQI0">
    <property type="GO annotations" value="2 GO annotations based on evolutionary models"/>
</dbReference>
<dbReference type="PhylomeDB" id="Q5SQI0"/>
<dbReference type="TreeFam" id="TF315643"/>
<dbReference type="BioCyc" id="MetaCyc:ENSG00000137343-MONOMER"/>
<dbReference type="BRENDA" id="2.3.1.108">
    <property type="organism ID" value="2681"/>
</dbReference>
<dbReference type="PathwayCommons" id="Q5SQI0"/>
<dbReference type="Reactome" id="R-HSA-5617833">
    <property type="pathway name" value="Cilium Assembly"/>
</dbReference>
<dbReference type="SignaLink" id="Q5SQI0"/>
<dbReference type="SIGNOR" id="Q5SQI0"/>
<dbReference type="BioGRID-ORCS" id="79969">
    <property type="hits" value="23 hits in 1159 CRISPR screens"/>
</dbReference>
<dbReference type="CD-CODE" id="FB4E32DD">
    <property type="entry name" value="Presynaptic clusters and postsynaptic densities"/>
</dbReference>
<dbReference type="ChiTaRS" id="ATAT1">
    <property type="organism name" value="human"/>
</dbReference>
<dbReference type="EvolutionaryTrace" id="Q5SQI0"/>
<dbReference type="GenomeRNAi" id="79969"/>
<dbReference type="Pharos" id="Q5SQI0">
    <property type="development level" value="Tbio"/>
</dbReference>
<dbReference type="PRO" id="PR:Q5SQI0"/>
<dbReference type="Proteomes" id="UP000005640">
    <property type="component" value="Chromosome 6"/>
</dbReference>
<dbReference type="RNAct" id="Q5SQI0">
    <property type="molecule type" value="protein"/>
</dbReference>
<dbReference type="Bgee" id="ENSG00000137343">
    <property type="expression patterns" value="Expressed in cortical plate and 95 other cell types or tissues"/>
</dbReference>
<dbReference type="ExpressionAtlas" id="Q5SQI0">
    <property type="expression patterns" value="baseline and differential"/>
</dbReference>
<dbReference type="GO" id="GO:0030424">
    <property type="term" value="C:axon"/>
    <property type="evidence" value="ECO:0007669"/>
    <property type="project" value="UniProtKB-SubCell"/>
</dbReference>
<dbReference type="GO" id="GO:0005905">
    <property type="term" value="C:clathrin-coated pit"/>
    <property type="evidence" value="ECO:0007669"/>
    <property type="project" value="UniProtKB-SubCell"/>
</dbReference>
<dbReference type="GO" id="GO:0005829">
    <property type="term" value="C:cytosol"/>
    <property type="evidence" value="ECO:0000314"/>
    <property type="project" value="HPA"/>
</dbReference>
<dbReference type="GO" id="GO:0005925">
    <property type="term" value="C:focal adhesion"/>
    <property type="evidence" value="ECO:0007669"/>
    <property type="project" value="UniProtKB-SubCell"/>
</dbReference>
<dbReference type="GO" id="GO:0005794">
    <property type="term" value="C:Golgi apparatus"/>
    <property type="evidence" value="ECO:0000314"/>
    <property type="project" value="HPA"/>
</dbReference>
<dbReference type="GO" id="GO:0005874">
    <property type="term" value="C:microtubule"/>
    <property type="evidence" value="ECO:0007669"/>
    <property type="project" value="InterPro"/>
</dbReference>
<dbReference type="GO" id="GO:0097427">
    <property type="term" value="C:microtubule bundle"/>
    <property type="evidence" value="ECO:0007669"/>
    <property type="project" value="Ensembl"/>
</dbReference>
<dbReference type="GO" id="GO:0072686">
    <property type="term" value="C:mitotic spindle"/>
    <property type="evidence" value="ECO:0000314"/>
    <property type="project" value="MGI"/>
</dbReference>
<dbReference type="GO" id="GO:0004468">
    <property type="term" value="F:L-lysine N-acetyltransferase activity, acting on acetyl phosphate as donor"/>
    <property type="evidence" value="ECO:0000314"/>
    <property type="project" value="UniProtKB"/>
</dbReference>
<dbReference type="GO" id="GO:0019799">
    <property type="term" value="F:tubulin N-acetyltransferase activity"/>
    <property type="evidence" value="ECO:0000314"/>
    <property type="project" value="MGI"/>
</dbReference>
<dbReference type="GO" id="GO:0071929">
    <property type="term" value="P:alpha-tubulin acetylation"/>
    <property type="evidence" value="ECO:0000314"/>
    <property type="project" value="UniProtKB"/>
</dbReference>
<dbReference type="GO" id="GO:0060271">
    <property type="term" value="P:cilium assembly"/>
    <property type="evidence" value="ECO:0000304"/>
    <property type="project" value="Reactome"/>
</dbReference>
<dbReference type="GO" id="GO:0021542">
    <property type="term" value="P:dentate gyrus development"/>
    <property type="evidence" value="ECO:0007669"/>
    <property type="project" value="Ensembl"/>
</dbReference>
<dbReference type="GO" id="GO:0000226">
    <property type="term" value="P:microtubule cytoskeleton organization"/>
    <property type="evidence" value="ECO:0000318"/>
    <property type="project" value="GO_Central"/>
</dbReference>
<dbReference type="GO" id="GO:0048666">
    <property type="term" value="P:neuron development"/>
    <property type="evidence" value="ECO:0007669"/>
    <property type="project" value="UniProtKB-UniRule"/>
</dbReference>
<dbReference type="GO" id="GO:0044546">
    <property type="term" value="P:NLRP3 inflammasome complex assembly"/>
    <property type="evidence" value="ECO:0007669"/>
    <property type="project" value="Ensembl"/>
</dbReference>
<dbReference type="GO" id="GO:1900227">
    <property type="term" value="P:positive regulation of NLRP3 inflammasome complex assembly"/>
    <property type="evidence" value="ECO:0007669"/>
    <property type="project" value="Ensembl"/>
</dbReference>
<dbReference type="GO" id="GO:0045598">
    <property type="term" value="P:regulation of fat cell differentiation"/>
    <property type="evidence" value="ECO:0007669"/>
    <property type="project" value="Ensembl"/>
</dbReference>
<dbReference type="GO" id="GO:0070507">
    <property type="term" value="P:regulation of microtubule cytoskeleton organization"/>
    <property type="evidence" value="ECO:0007669"/>
    <property type="project" value="UniProtKB-UniRule"/>
</dbReference>
<dbReference type="GO" id="GO:0009612">
    <property type="term" value="P:response to mechanical stimulus"/>
    <property type="evidence" value="ECO:0007669"/>
    <property type="project" value="Ensembl"/>
</dbReference>
<dbReference type="GO" id="GO:0048265">
    <property type="term" value="P:response to pain"/>
    <property type="evidence" value="ECO:0007669"/>
    <property type="project" value="Ensembl"/>
</dbReference>
<dbReference type="GO" id="GO:0007283">
    <property type="term" value="P:spermatogenesis"/>
    <property type="evidence" value="ECO:0007669"/>
    <property type="project" value="Ensembl"/>
</dbReference>
<dbReference type="CDD" id="cd04301">
    <property type="entry name" value="NAT_SF"/>
    <property type="match status" value="1"/>
</dbReference>
<dbReference type="DisProt" id="DP02419"/>
<dbReference type="FunFam" id="3.40.630.30:FF:000060">
    <property type="entry name" value="Alpha-tubulin N-acetyltransferase 1"/>
    <property type="match status" value="1"/>
</dbReference>
<dbReference type="Gene3D" id="3.40.630.30">
    <property type="match status" value="1"/>
</dbReference>
<dbReference type="Gene3D" id="6.20.370.120">
    <property type="match status" value="1"/>
</dbReference>
<dbReference type="HAMAP" id="MF_03130">
    <property type="entry name" value="mec17"/>
    <property type="match status" value="1"/>
</dbReference>
<dbReference type="InterPro" id="IPR038746">
    <property type="entry name" value="Atat"/>
</dbReference>
<dbReference type="InterPro" id="IPR007965">
    <property type="entry name" value="GNAT_ATAT"/>
</dbReference>
<dbReference type="PANTHER" id="PTHR12327">
    <property type="entry name" value="ALPHA-TUBULIN N-ACETYLTRANSFERASE 1"/>
    <property type="match status" value="1"/>
</dbReference>
<dbReference type="PANTHER" id="PTHR12327:SF0">
    <property type="entry name" value="ALPHA-TUBULIN N-ACETYLTRANSFERASE 1"/>
    <property type="match status" value="1"/>
</dbReference>
<dbReference type="Pfam" id="PF05301">
    <property type="entry name" value="Acetyltransf_16"/>
    <property type="match status" value="1"/>
</dbReference>
<dbReference type="PROSITE" id="PS51730">
    <property type="entry name" value="GNAT_ATAT"/>
    <property type="match status" value="1"/>
</dbReference>
<sequence length="421" mass="46810">MEFPFDVDALFPERITVLDQHLRPPARRPGTTTPARVDLQQQIMTIIDELGKASAKAQNLSAPITSASRMQSNRHVVYILKDSSARPAGKGAIIGFIKVGYKKLFVLDDREAHNEVEPLCILDFYIHESVQRHGHGRELFQYMLQKERVEPHQLAIDRPSQKLLKFLNKHYNLETTVPQVNNFVIFEGFFAHQHRPPAPSLRATRHSRAAAVDPTPAAPARKLPPKRAEGDIKPYSSSDREFLKVAVEPPWPLNRAPRRATPPAHPPPRSSSLGNSPERGPLRPFVPEQELLRSLRLCPPHPTARLLLAADPGGSPAQRRRTRGTPPGLVAQSCCYSRHGGVNSSSPNTGNQDSKQGEQETKNRSASEEQALSQDGSGEKPMHTAPPQAPAPPAQSWTVGGDILNARFIRNLQERRSTRPW</sequence>
<protein>
    <recommendedName>
        <fullName evidence="3">Alpha-tubulin N-acetyltransferase 1</fullName>
        <shortName evidence="3">Alpha-TAT</shortName>
        <shortName evidence="3">Alpha-TAT1</shortName>
        <shortName evidence="3">TAT</shortName>
        <ecNumber evidence="3 5 7 11">2.3.1.108</ecNumber>
    </recommendedName>
    <alternativeName>
        <fullName evidence="3">Acetyltransferase mec-17 homolog</fullName>
    </alternativeName>
</protein>
<reference evidence="17 22" key="1">
    <citation type="journal article" date="2003" name="Cancer Lett.">
        <title>Neuroblastoma oligo-capping cDNA project: toward the understanding of the genesis and biology of neuroblastoma.</title>
        <authorList>
            <person name="Ohira M."/>
            <person name="Morohashi A."/>
            <person name="Nakamura Y."/>
            <person name="Isogai E."/>
            <person name="Furuya K."/>
            <person name="Hamano S."/>
            <person name="Machida T."/>
            <person name="Aoyama M."/>
            <person name="Fukumura M."/>
            <person name="Miyazaki K."/>
            <person name="Suzuki Y."/>
            <person name="Sugano S."/>
            <person name="Hirato J."/>
            <person name="Nakagawara A."/>
        </authorList>
    </citation>
    <scope>NUCLEOTIDE SEQUENCE [LARGE SCALE MRNA] (ISOFORM 4)</scope>
    <source>
        <tissue evidence="22">Neuroblastoma</tissue>
    </source>
</reference>
<reference evidence="17 21" key="2">
    <citation type="journal article" date="2004" name="Nat. Genet.">
        <title>Complete sequencing and characterization of 21,243 full-length human cDNAs.</title>
        <authorList>
            <person name="Ota T."/>
            <person name="Suzuki Y."/>
            <person name="Nishikawa T."/>
            <person name="Otsuki T."/>
            <person name="Sugiyama T."/>
            <person name="Irie R."/>
            <person name="Wakamatsu A."/>
            <person name="Hayashi K."/>
            <person name="Sato H."/>
            <person name="Nagai K."/>
            <person name="Kimura K."/>
            <person name="Makita H."/>
            <person name="Sekine M."/>
            <person name="Obayashi M."/>
            <person name="Nishi T."/>
            <person name="Shibahara T."/>
            <person name="Tanaka T."/>
            <person name="Ishii S."/>
            <person name="Yamamoto J."/>
            <person name="Saito K."/>
            <person name="Kawai Y."/>
            <person name="Isono Y."/>
            <person name="Nakamura Y."/>
            <person name="Nagahari K."/>
            <person name="Murakami K."/>
            <person name="Yasuda T."/>
            <person name="Iwayanagi T."/>
            <person name="Wagatsuma M."/>
            <person name="Shiratori A."/>
            <person name="Sudo H."/>
            <person name="Hosoiri T."/>
            <person name="Kaku Y."/>
            <person name="Kodaira H."/>
            <person name="Kondo H."/>
            <person name="Sugawara M."/>
            <person name="Takahashi M."/>
            <person name="Kanda K."/>
            <person name="Yokoi T."/>
            <person name="Furuya T."/>
            <person name="Kikkawa E."/>
            <person name="Omura Y."/>
            <person name="Abe K."/>
            <person name="Kamihara K."/>
            <person name="Katsuta N."/>
            <person name="Sato K."/>
            <person name="Tanikawa M."/>
            <person name="Yamazaki M."/>
            <person name="Ninomiya K."/>
            <person name="Ishibashi T."/>
            <person name="Yamashita H."/>
            <person name="Murakawa K."/>
            <person name="Fujimori K."/>
            <person name="Tanai H."/>
            <person name="Kimata M."/>
            <person name="Watanabe M."/>
            <person name="Hiraoka S."/>
            <person name="Chiba Y."/>
            <person name="Ishida S."/>
            <person name="Ono Y."/>
            <person name="Takiguchi S."/>
            <person name="Watanabe S."/>
            <person name="Yosida M."/>
            <person name="Hotuta T."/>
            <person name="Kusano J."/>
            <person name="Kanehori K."/>
            <person name="Takahashi-Fujii A."/>
            <person name="Hara H."/>
            <person name="Tanase T.-O."/>
            <person name="Nomura Y."/>
            <person name="Togiya S."/>
            <person name="Komai F."/>
            <person name="Hara R."/>
            <person name="Takeuchi K."/>
            <person name="Arita M."/>
            <person name="Imose N."/>
            <person name="Musashino K."/>
            <person name="Yuuki H."/>
            <person name="Oshima A."/>
            <person name="Sasaki N."/>
            <person name="Aotsuka S."/>
            <person name="Yoshikawa Y."/>
            <person name="Matsunawa H."/>
            <person name="Ichihara T."/>
            <person name="Shiohata N."/>
            <person name="Sano S."/>
            <person name="Moriya S."/>
            <person name="Momiyama H."/>
            <person name="Satoh N."/>
            <person name="Takami S."/>
            <person name="Terashima Y."/>
            <person name="Suzuki O."/>
            <person name="Nakagawa S."/>
            <person name="Senoh A."/>
            <person name="Mizoguchi H."/>
            <person name="Goto Y."/>
            <person name="Shimizu F."/>
            <person name="Wakebe H."/>
            <person name="Hishigaki H."/>
            <person name="Watanabe T."/>
            <person name="Sugiyama A."/>
            <person name="Takemoto M."/>
            <person name="Kawakami B."/>
            <person name="Yamazaki M."/>
            <person name="Watanabe K."/>
            <person name="Kumagai A."/>
            <person name="Itakura S."/>
            <person name="Fukuzumi Y."/>
            <person name="Fujimori Y."/>
            <person name="Komiyama M."/>
            <person name="Tashiro H."/>
            <person name="Tanigami A."/>
            <person name="Fujiwara T."/>
            <person name="Ono T."/>
            <person name="Yamada K."/>
            <person name="Fujii Y."/>
            <person name="Ozaki K."/>
            <person name="Hirao M."/>
            <person name="Ohmori Y."/>
            <person name="Kawabata A."/>
            <person name="Hikiji T."/>
            <person name="Kobatake N."/>
            <person name="Inagaki H."/>
            <person name="Ikema Y."/>
            <person name="Okamoto S."/>
            <person name="Okitani R."/>
            <person name="Kawakami T."/>
            <person name="Noguchi S."/>
            <person name="Itoh T."/>
            <person name="Shigeta K."/>
            <person name="Senba T."/>
            <person name="Matsumura K."/>
            <person name="Nakajima Y."/>
            <person name="Mizuno T."/>
            <person name="Morinaga M."/>
            <person name="Sasaki M."/>
            <person name="Togashi T."/>
            <person name="Oyama M."/>
            <person name="Hata H."/>
            <person name="Watanabe M."/>
            <person name="Komatsu T."/>
            <person name="Mizushima-Sugano J."/>
            <person name="Satoh T."/>
            <person name="Shirai Y."/>
            <person name="Takahashi Y."/>
            <person name="Nakagawa K."/>
            <person name="Okumura K."/>
            <person name="Nagase T."/>
            <person name="Nomura N."/>
            <person name="Kikuchi H."/>
            <person name="Masuho Y."/>
            <person name="Yamashita R."/>
            <person name="Nakai K."/>
            <person name="Yada T."/>
            <person name="Nakamura Y."/>
            <person name="Ohara O."/>
            <person name="Isogai T."/>
            <person name="Sugano S."/>
        </authorList>
    </citation>
    <scope>NUCLEOTIDE SEQUENCE [LARGE SCALE MRNA] (ISOFORM 5)</scope>
</reference>
<reference evidence="20" key="3">
    <citation type="journal article" date="2003" name="Nature">
        <title>The DNA sequence and analysis of human chromosome 6.</title>
        <authorList>
            <person name="Mungall A.J."/>
            <person name="Palmer S.A."/>
            <person name="Sims S.K."/>
            <person name="Edwards C.A."/>
            <person name="Ashurst J.L."/>
            <person name="Wilming L."/>
            <person name="Jones M.C."/>
            <person name="Horton R."/>
            <person name="Hunt S.E."/>
            <person name="Scott C.E."/>
            <person name="Gilbert J.G.R."/>
            <person name="Clamp M.E."/>
            <person name="Bethel G."/>
            <person name="Milne S."/>
            <person name="Ainscough R."/>
            <person name="Almeida J.P."/>
            <person name="Ambrose K.D."/>
            <person name="Andrews T.D."/>
            <person name="Ashwell R.I.S."/>
            <person name="Babbage A.K."/>
            <person name="Bagguley C.L."/>
            <person name="Bailey J."/>
            <person name="Banerjee R."/>
            <person name="Barker D.J."/>
            <person name="Barlow K.F."/>
            <person name="Bates K."/>
            <person name="Beare D.M."/>
            <person name="Beasley H."/>
            <person name="Beasley O."/>
            <person name="Bird C.P."/>
            <person name="Blakey S.E."/>
            <person name="Bray-Allen S."/>
            <person name="Brook J."/>
            <person name="Brown A.J."/>
            <person name="Brown J.Y."/>
            <person name="Burford D.C."/>
            <person name="Burrill W."/>
            <person name="Burton J."/>
            <person name="Carder C."/>
            <person name="Carter N.P."/>
            <person name="Chapman J.C."/>
            <person name="Clark S.Y."/>
            <person name="Clark G."/>
            <person name="Clee C.M."/>
            <person name="Clegg S."/>
            <person name="Cobley V."/>
            <person name="Collier R.E."/>
            <person name="Collins J.E."/>
            <person name="Colman L.K."/>
            <person name="Corby N.R."/>
            <person name="Coville G.J."/>
            <person name="Culley K.M."/>
            <person name="Dhami P."/>
            <person name="Davies J."/>
            <person name="Dunn M."/>
            <person name="Earthrowl M.E."/>
            <person name="Ellington A.E."/>
            <person name="Evans K.A."/>
            <person name="Faulkner L."/>
            <person name="Francis M.D."/>
            <person name="Frankish A."/>
            <person name="Frankland J."/>
            <person name="French L."/>
            <person name="Garner P."/>
            <person name="Garnett J."/>
            <person name="Ghori M.J."/>
            <person name="Gilby L.M."/>
            <person name="Gillson C.J."/>
            <person name="Glithero R.J."/>
            <person name="Grafham D.V."/>
            <person name="Grant M."/>
            <person name="Gribble S."/>
            <person name="Griffiths C."/>
            <person name="Griffiths M.N.D."/>
            <person name="Hall R."/>
            <person name="Halls K.S."/>
            <person name="Hammond S."/>
            <person name="Harley J.L."/>
            <person name="Hart E.A."/>
            <person name="Heath P.D."/>
            <person name="Heathcott R."/>
            <person name="Holmes S.J."/>
            <person name="Howden P.J."/>
            <person name="Howe K.L."/>
            <person name="Howell G.R."/>
            <person name="Huckle E."/>
            <person name="Humphray S.J."/>
            <person name="Humphries M.D."/>
            <person name="Hunt A.R."/>
            <person name="Johnson C.M."/>
            <person name="Joy A.A."/>
            <person name="Kay M."/>
            <person name="Keenan S.J."/>
            <person name="Kimberley A.M."/>
            <person name="King A."/>
            <person name="Laird G.K."/>
            <person name="Langford C."/>
            <person name="Lawlor S."/>
            <person name="Leongamornlert D.A."/>
            <person name="Leversha M."/>
            <person name="Lloyd C.R."/>
            <person name="Lloyd D.M."/>
            <person name="Loveland J.E."/>
            <person name="Lovell J."/>
            <person name="Martin S."/>
            <person name="Mashreghi-Mohammadi M."/>
            <person name="Maslen G.L."/>
            <person name="Matthews L."/>
            <person name="McCann O.T."/>
            <person name="McLaren S.J."/>
            <person name="McLay K."/>
            <person name="McMurray A."/>
            <person name="Moore M.J.F."/>
            <person name="Mullikin J.C."/>
            <person name="Niblett D."/>
            <person name="Nickerson T."/>
            <person name="Novik K.L."/>
            <person name="Oliver K."/>
            <person name="Overton-Larty E.K."/>
            <person name="Parker A."/>
            <person name="Patel R."/>
            <person name="Pearce A.V."/>
            <person name="Peck A.I."/>
            <person name="Phillimore B.J.C.T."/>
            <person name="Phillips S."/>
            <person name="Plumb R.W."/>
            <person name="Porter K.M."/>
            <person name="Ramsey Y."/>
            <person name="Ranby S.A."/>
            <person name="Rice C.M."/>
            <person name="Ross M.T."/>
            <person name="Searle S.M."/>
            <person name="Sehra H.K."/>
            <person name="Sheridan E."/>
            <person name="Skuce C.D."/>
            <person name="Smith S."/>
            <person name="Smith M."/>
            <person name="Spraggon L."/>
            <person name="Squares S.L."/>
            <person name="Steward C.A."/>
            <person name="Sycamore N."/>
            <person name="Tamlyn-Hall G."/>
            <person name="Tester J."/>
            <person name="Theaker A.J."/>
            <person name="Thomas D.W."/>
            <person name="Thorpe A."/>
            <person name="Tracey A."/>
            <person name="Tromans A."/>
            <person name="Tubby B."/>
            <person name="Wall M."/>
            <person name="Wallis J.M."/>
            <person name="West A.P."/>
            <person name="White S.S."/>
            <person name="Whitehead S.L."/>
            <person name="Whittaker H."/>
            <person name="Wild A."/>
            <person name="Willey D.J."/>
            <person name="Wilmer T.E."/>
            <person name="Wood J.M."/>
            <person name="Wray P.W."/>
            <person name="Wyatt J.C."/>
            <person name="Young L."/>
            <person name="Younger R.M."/>
            <person name="Bentley D.R."/>
            <person name="Coulson A."/>
            <person name="Durbin R.M."/>
            <person name="Hubbard T."/>
            <person name="Sulston J.E."/>
            <person name="Dunham I."/>
            <person name="Rogers J."/>
            <person name="Beck S."/>
        </authorList>
    </citation>
    <scope>NUCLEOTIDE SEQUENCE [LARGE SCALE GENOMIC DNA]</scope>
</reference>
<reference evidence="17 23" key="4">
    <citation type="submission" date="2005-07" db="EMBL/GenBank/DDBJ databases">
        <authorList>
            <person name="Mural R.J."/>
            <person name="Istrail S."/>
            <person name="Sutton G.G."/>
            <person name="Florea L."/>
            <person name="Halpern A.L."/>
            <person name="Mobarry C.M."/>
            <person name="Lippert R."/>
            <person name="Walenz B."/>
            <person name="Shatkay H."/>
            <person name="Dew I."/>
            <person name="Miller J.R."/>
            <person name="Flanigan M.J."/>
            <person name="Edwards N.J."/>
            <person name="Bolanos R."/>
            <person name="Fasulo D."/>
            <person name="Halldorsson B.V."/>
            <person name="Hannenhalli S."/>
            <person name="Turner R."/>
            <person name="Yooseph S."/>
            <person name="Lu F."/>
            <person name="Nusskern D.R."/>
            <person name="Shue B.C."/>
            <person name="Zheng X.H."/>
            <person name="Zhong F."/>
            <person name="Delcher A.L."/>
            <person name="Huson D.H."/>
            <person name="Kravitz S.A."/>
            <person name="Mouchard L."/>
            <person name="Reinert K."/>
            <person name="Remington K.A."/>
            <person name="Clark A.G."/>
            <person name="Waterman M.S."/>
            <person name="Eichler E.E."/>
            <person name="Adams M.D."/>
            <person name="Hunkapiller M.W."/>
            <person name="Myers E.W."/>
            <person name="Venter J.C."/>
        </authorList>
    </citation>
    <scope>NUCLEOTIDE SEQUENCE [LARGE SCALE GENOMIC DNA]</scope>
</reference>
<reference evidence="17 19" key="5">
    <citation type="journal article" date="2004" name="Genome Res.">
        <title>The status, quality, and expansion of the NIH full-length cDNA project: the Mammalian Gene Collection (MGC).</title>
        <authorList>
            <consortium name="The MGC Project Team"/>
        </authorList>
    </citation>
    <scope>NUCLEOTIDE SEQUENCE [LARGE SCALE MRNA] (ISOFORMS 2 AND 7)</scope>
    <source>
        <tissue evidence="19">Brain</tissue>
        <tissue evidence="18">Lung</tissue>
    </source>
</reference>
<reference key="6">
    <citation type="journal article" date="2007" name="BMC Genomics">
        <title>The full-ORF clone resource of the German cDNA consortium.</title>
        <authorList>
            <person name="Bechtel S."/>
            <person name="Rosenfelder H."/>
            <person name="Duda A."/>
            <person name="Schmidt C.P."/>
            <person name="Ernst U."/>
            <person name="Wellenreuther R."/>
            <person name="Mehrle A."/>
            <person name="Schuster C."/>
            <person name="Bahr A."/>
            <person name="Bloecker H."/>
            <person name="Heubner D."/>
            <person name="Hoerlein A."/>
            <person name="Michel G."/>
            <person name="Wedler H."/>
            <person name="Koehrer K."/>
            <person name="Ottenwaelder B."/>
            <person name="Poustka A."/>
            <person name="Wiemann S."/>
            <person name="Schupp I."/>
        </authorList>
    </citation>
    <scope>NUCLEOTIDE SEQUENCE [LARGE SCALE MRNA] OF 3-421 (ISOFORM 4)</scope>
    <source>
        <tissue>Brain</tissue>
    </source>
</reference>
<reference key="7">
    <citation type="journal article" date="2010" name="Nature">
        <title>MEC-17 is an alpha-tubulin acetyltransferase.</title>
        <authorList>
            <person name="Akella J.S."/>
            <person name="Wloga D."/>
            <person name="Kim J."/>
            <person name="Starostina N.G."/>
            <person name="Lyons-Abbott S."/>
            <person name="Morrissette N.S."/>
            <person name="Dougan S.T."/>
            <person name="Kipreos E.T."/>
            <person name="Gaertig J."/>
        </authorList>
    </citation>
    <scope>FUNCTION</scope>
    <scope>CATALYTIC ACTIVITY</scope>
</reference>
<reference key="8">
    <citation type="journal article" date="2010" name="Proc. Natl. Acad. Sci. U.S.A.">
        <title>The major alpha-tubulin K40 acetyltransferase alphaTAT1 promotes rapid ciliogenesis and efficient mechanosensation.</title>
        <authorList>
            <person name="Shida T."/>
            <person name="Cueva J.G."/>
            <person name="Xu Z."/>
            <person name="Goodman M.B."/>
            <person name="Nachury M.V."/>
        </authorList>
    </citation>
    <scope>FUNCTION</scope>
    <scope>INTERACTION WITH THE BBSOME COMPLEX</scope>
    <scope>BIOPHYSICOCHEMICAL PROPERTIES</scope>
    <scope>MUTAGENESIS OF ASP-157</scope>
</reference>
<reference key="9">
    <citation type="journal article" date="2012" name="PLoS ONE">
        <title>Luminal localization of alpha-tubulin K40 acetylation by cryo-EM analysis of fab-labeled microtubules.</title>
        <authorList>
            <person name="Soppina V."/>
            <person name="Herbstman J.F."/>
            <person name="Skiniotis G."/>
            <person name="Verhey K.J."/>
        </authorList>
    </citation>
    <scope>FUNCTION</scope>
</reference>
<reference key="10">
    <citation type="journal article" date="2013" name="J. Proteome Res.">
        <title>Toward a comprehensive characterization of a human cancer cell phosphoproteome.</title>
        <authorList>
            <person name="Zhou H."/>
            <person name="Di Palma S."/>
            <person name="Preisinger C."/>
            <person name="Peng M."/>
            <person name="Polat A.N."/>
            <person name="Heck A.J."/>
            <person name="Mohammed S."/>
        </authorList>
    </citation>
    <scope>PHOSPHORYLATION [LARGE SCALE ANALYSIS] AT SER-276 AND SER-315</scope>
    <scope>IDENTIFICATION BY MASS SPECTROMETRY [LARGE SCALE ANALYSIS]</scope>
    <source>
        <tissue>Erythroleukemia</tissue>
    </source>
</reference>
<reference key="11">
    <citation type="journal article" date="2013" name="Nature">
        <title>alphaTAT1 catalyses microtubule acetylation at clathrin-coated pits.</title>
        <authorList>
            <person name="Montagnac G."/>
            <person name="Meas-Yedid V."/>
            <person name="Irondelle M."/>
            <person name="Castro-Castro A."/>
            <person name="Franco M."/>
            <person name="Shida T."/>
            <person name="Nachury M.V."/>
            <person name="Benmerah A."/>
            <person name="Olivo-Marin J.C."/>
            <person name="Chavrier P."/>
        </authorList>
    </citation>
    <scope>FUNCTION</scope>
    <scope>INTERACTION WITH AP2A2</scope>
    <scope>SUBCELLULAR LOCATION</scope>
</reference>
<reference key="12">
    <citation type="journal article" date="2014" name="Mol. Cell. Proteomics">
        <title>Immunoaffinity enrichment and mass spectrometry analysis of protein methylation.</title>
        <authorList>
            <person name="Guo A."/>
            <person name="Gu H."/>
            <person name="Zhou J."/>
            <person name="Mulhern D."/>
            <person name="Wang Y."/>
            <person name="Lee K.A."/>
            <person name="Yang V."/>
            <person name="Aguiar M."/>
            <person name="Kornhauser J."/>
            <person name="Jia X."/>
            <person name="Ren J."/>
            <person name="Beausoleil S.A."/>
            <person name="Silva J.C."/>
            <person name="Vemulapalli V."/>
            <person name="Bedford M.T."/>
            <person name="Comb M.J."/>
        </authorList>
    </citation>
    <scope>METHYLATION [LARGE SCALE ANALYSIS] AT ARG-323</scope>
    <scope>IDENTIFICATION BY MASS SPECTROMETRY [LARGE SCALE ANALYSIS]</scope>
    <source>
        <tissue>Colon carcinoma</tissue>
    </source>
</reference>
<reference key="13">
    <citation type="journal article" date="2012" name="Proc. Natl. Acad. Sci. U.S.A.">
        <title>Atomic resolution structure of human alpha-tubulin acetyltransferase bound to acetyl-CoA.</title>
        <authorList>
            <person name="Taschner M."/>
            <person name="Vetter M."/>
            <person name="Lorentzen E."/>
        </authorList>
    </citation>
    <scope>X-RAY CRYSTALLOGRAPHY (1.05 ANGSTROMS) OF 1-196 IN COMPLEX WITH ACETYL-COA</scope>
    <scope>MUTAGENESIS OF GLN-58; SER-61; ILE-64 AND ARG-158</scope>
</reference>
<reference key="14">
    <citation type="journal article" date="2012" name="Proc. Natl. Acad. Sci. U.S.A.">
        <title>Structure of the alpha-tubulin acetyltransferase, alphaTAT1, and implications for tubulin-specific acetylation.</title>
        <authorList>
            <person name="Friedmann D.R."/>
            <person name="Aguilar A."/>
            <person name="Fan J."/>
            <person name="Nachury M.V."/>
            <person name="Marmorstein R."/>
        </authorList>
    </citation>
    <scope>X-RAY CRYSTALLOGRAPHY (2.11 ANGSTROMS) OF 2-236 IN COMPLEX WITH ACETYL-COA</scope>
    <scope>CATALYTIC ACTIVITY</scope>
    <scope>BIOPHYSICOCHEMICAL PROPERTIES</scope>
    <scope>MUTAGENESIS OF ILE-64; ARG-69; PHE-105; VAL-106; LEU-107; ASP-108; ASP-109; GLU-111; GLU-115; GLU-117; CYS-120; ASP-157; ASN-182 AND PHE-183</scope>
</reference>
<reference key="15">
    <citation type="journal article" date="2014" name="Cell">
        <title>Molecular basis for age-dependent microtubule acetylation by tubulin acetyltransferase.</title>
        <authorList>
            <person name="Szyk A."/>
            <person name="Deaconescu A.M."/>
            <person name="Spector J."/>
            <person name="Goodman B."/>
            <person name="Valenstein M.L."/>
            <person name="Ziolkowska N.E."/>
            <person name="Kormendi V."/>
            <person name="Grigorieff N."/>
            <person name="Roll-Mecak A."/>
        </authorList>
    </citation>
    <scope>X-RAY CRYSTALLOGRAPHY (1.35 ANGSTROMS) OF 1-194 IN COMPLEX WITH ACETYL-COA</scope>
    <scope>FUNCTION</scope>
    <scope>CATALYTIC ACTIVITY</scope>
    <scope>MUTAGENESIS OF ILE-64; LYS-102 AND ARG-158</scope>
</reference>
<comment type="function">
    <text evidence="3 5 6 10 11">Specifically acetylates 'Lys-40' in alpha-tubulin on the lumenal side of microtubules. Promotes microtubule destabilization and accelerates microtubule dynamics; this activity may be independent of acetylation activity. Acetylates alpha-tubulin with a slow enzymatic rate, due to a catalytic site that is not optimized for acetyl transfer. Enters the microtubule through each end and diffuses quickly throughout the lumen of microtubules. Acetylates only long/old microtubules because of its slow acetylation rate since it does not have time to act on dynamically unstable microtubules before the enzyme is released. Required for normal sperm flagellar function. Promotes directional cell locomotion and chemotaxis, through AP2A2-dependent acetylation of alpha-tubulin at clathrin-coated pits that are concentrated at the leading edge of migrating cells. May facilitate primary cilium assembly.</text>
</comment>
<comment type="catalytic activity">
    <reaction evidence="3 5 7 9 11">
        <text>L-lysyl-[alpha-tubulin] + acetyl-CoA = N(6)-acetyl-L-lysyl-[alpha-tubulin] + CoA + H(+)</text>
        <dbReference type="Rhea" id="RHEA:15277"/>
        <dbReference type="Rhea" id="RHEA-COMP:11278"/>
        <dbReference type="Rhea" id="RHEA-COMP:11279"/>
        <dbReference type="ChEBI" id="CHEBI:15378"/>
        <dbReference type="ChEBI" id="CHEBI:29969"/>
        <dbReference type="ChEBI" id="CHEBI:57287"/>
        <dbReference type="ChEBI" id="CHEBI:57288"/>
        <dbReference type="ChEBI" id="CHEBI:61930"/>
        <dbReference type="EC" id="2.3.1.108"/>
    </reaction>
</comment>
<comment type="biophysicochemical properties">
    <kinetics>
        <KM evidence="6 7">2 uM for free alpha-tubulin</KM>
        <KM evidence="6 7">1.6 uM for polymerized tubulin (microtubules)</KM>
        <KM evidence="6 7">2.2 uM for acetyl-CoA</KM>
        <text>kcat is 2.2 h(-1) for the acetylation of polymerized tubulin (microtubules), 0.35 h(-1) for the acetylation of free tubulin, and 1.47 h(-1)with acetyl-CoA as substrate.</text>
    </kinetics>
</comment>
<comment type="subunit">
    <text evidence="3 6 7 8 10">Component of the BBSome complex. Interacts with AP2 alpha-adaptins, including AP2A2, but not with AP1 gamma-adaptin (AP1G1/AP1G2); this interaction is required for efficient alpha-tubulin acetylation, hence clathrin-coated pits are sites of microtubule acetylation.</text>
</comment>
<comment type="interaction">
    <interactant intactId="EBI-6658043">
        <id>Q5SQI0</id>
    </interactant>
    <interactant intactId="EBI-356498">
        <id>P62258</id>
        <label>YWHAE</label>
    </interactant>
    <organismsDiffer>false</organismsDiffer>
    <experiments>2</experiments>
</comment>
<comment type="subcellular location">
    <subcellularLocation>
        <location evidence="3 10">Cytoplasm</location>
    </subcellularLocation>
    <subcellularLocation>
        <location evidence="3 10">Membrane</location>
        <location evidence="3 10">Clathrin-coated pit</location>
    </subcellularLocation>
    <subcellularLocation>
        <location evidence="3 10">Cell junction</location>
        <location evidence="3 10">Focal adhesion</location>
    </subcellularLocation>
    <subcellularLocation>
        <location evidence="3">Cell projection</location>
        <location evidence="3">Axon</location>
    </subcellularLocation>
    <subcellularLocation>
        <location evidence="3">Cytoplasm</location>
        <location evidence="3">Cytoskeleton</location>
    </subcellularLocation>
    <subcellularLocation>
        <location evidence="3">Cytoplasm</location>
        <location evidence="3">Cytoskeleton</location>
        <location evidence="3">Spindle</location>
    </subcellularLocation>
</comment>
<comment type="alternative products">
    <event type="alternative splicing"/>
    <isoform>
        <id>Q5SQI0-1</id>
        <name evidence="13">1</name>
        <sequence type="displayed"/>
    </isoform>
    <isoform>
        <id>Q5SQI0-2</id>
        <name evidence="13 15">2</name>
        <sequence type="described" ref="VSP_052899 VSP_052900"/>
    </isoform>
    <isoform>
        <id>Q5SQI0-3</id>
        <name evidence="13">3</name>
        <sequence type="described" ref="VSP_052901"/>
    </isoform>
    <isoform>
        <id>Q5SQI0-4</id>
        <name evidence="12 13">4</name>
        <sequence type="described" ref="VSP_052902 VSP_052904"/>
    </isoform>
    <isoform>
        <id>Q5SQI0-5</id>
        <name evidence="13 14">5</name>
        <sequence type="described" ref="VSP_052903"/>
    </isoform>
    <isoform>
        <id>Q5SQI0-6</id>
        <name evidence="13">6</name>
        <sequence type="described" ref="VSP_052901 VSP_052902 VSP_052904"/>
    </isoform>
    <isoform>
        <id>Q5SQI0-7</id>
        <name evidence="13 15">7</name>
        <sequence type="described" ref="VSP_052901 VSP_052903"/>
    </isoform>
</comment>
<comment type="PTM">
    <text evidence="3">Autoacetylation strongly increases tubulin acetylation.</text>
</comment>
<comment type="similarity">
    <text evidence="3">Belongs to the acetyltransferase ATAT1 family.</text>
</comment>
<proteinExistence type="evidence at protein level"/>
<evidence type="ECO:0000250" key="1">
    <source>
        <dbReference type="UniProtKB" id="Q6MG11"/>
    </source>
</evidence>
<evidence type="ECO:0000250" key="2">
    <source>
        <dbReference type="UniProtKB" id="Q8K341"/>
    </source>
</evidence>
<evidence type="ECO:0000255" key="3">
    <source>
        <dbReference type="HAMAP-Rule" id="MF_03130"/>
    </source>
</evidence>
<evidence type="ECO:0000256" key="4">
    <source>
        <dbReference type="SAM" id="MobiDB-lite"/>
    </source>
</evidence>
<evidence type="ECO:0000269" key="5">
    <source>
    </source>
</evidence>
<evidence type="ECO:0000269" key="6">
    <source>
    </source>
</evidence>
<evidence type="ECO:0000269" key="7">
    <source>
    </source>
</evidence>
<evidence type="ECO:0000269" key="8">
    <source>
    </source>
</evidence>
<evidence type="ECO:0000269" key="9">
    <source>
    </source>
</evidence>
<evidence type="ECO:0000269" key="10">
    <source>
    </source>
</evidence>
<evidence type="ECO:0000269" key="11">
    <source>
    </source>
</evidence>
<evidence type="ECO:0000303" key="12">
    <source>
    </source>
</evidence>
<evidence type="ECO:0000303" key="13">
    <source>
    </source>
</evidence>
<evidence type="ECO:0000303" key="14">
    <source>
    </source>
</evidence>
<evidence type="ECO:0000303" key="15">
    <source>
    </source>
</evidence>
<evidence type="ECO:0000303" key="16">
    <source>
    </source>
</evidence>
<evidence type="ECO:0000305" key="17"/>
<evidence type="ECO:0000312" key="18">
    <source>
        <dbReference type="EMBL" id="AAH06105.1"/>
    </source>
</evidence>
<evidence type="ECO:0000312" key="19">
    <source>
        <dbReference type="EMBL" id="AAH47303.1"/>
    </source>
</evidence>
<evidence type="ECO:0000312" key="20">
    <source>
        <dbReference type="EMBL" id="AL732442"/>
    </source>
</evidence>
<evidence type="ECO:0000312" key="21">
    <source>
        <dbReference type="EMBL" id="BAB14472.1"/>
    </source>
</evidence>
<evidence type="ECO:0000312" key="22">
    <source>
        <dbReference type="EMBL" id="BAE45758.1"/>
    </source>
</evidence>
<evidence type="ECO:0000312" key="23">
    <source>
        <dbReference type="EMBL" id="EAX03306.1"/>
    </source>
</evidence>
<evidence type="ECO:0007744" key="24">
    <source>
    </source>
</evidence>
<evidence type="ECO:0007744" key="25">
    <source>
    </source>
</evidence>
<evidence type="ECO:0007829" key="26">
    <source>
        <dbReference type="PDB" id="3VWD"/>
    </source>
</evidence>
<evidence type="ECO:0007829" key="27">
    <source>
        <dbReference type="PDB" id="4B5O"/>
    </source>
</evidence>
<evidence type="ECO:0007829" key="28">
    <source>
        <dbReference type="PDB" id="4B5P"/>
    </source>
</evidence>
<keyword id="KW-0002">3D-structure</keyword>
<keyword id="KW-0007">Acetylation</keyword>
<keyword id="KW-0012">Acyltransferase</keyword>
<keyword id="KW-0025">Alternative splicing</keyword>
<keyword id="KW-0965">Cell junction</keyword>
<keyword id="KW-0966">Cell projection</keyword>
<keyword id="KW-0168">Coated pit</keyword>
<keyword id="KW-0963">Cytoplasm</keyword>
<keyword id="KW-0206">Cytoskeleton</keyword>
<keyword id="KW-0472">Membrane</keyword>
<keyword id="KW-0488">Methylation</keyword>
<keyword id="KW-0597">Phosphoprotein</keyword>
<keyword id="KW-1267">Proteomics identification</keyword>
<keyword id="KW-1185">Reference proteome</keyword>
<keyword id="KW-0808">Transferase</keyword>
<name>ATAT_HUMAN</name>
<gene>
    <name evidence="3" type="primary">ATAT1</name>
    <name type="synonym">C6orf134</name>
    <name evidence="3" type="synonym">MEC17</name>
    <name type="ORF">Nbla00487</name>
</gene>
<accession>Q5SQI0</accession>
<accession>A2AB28</accession>
<accession>Q3LIB0</accession>
<accession>Q5JP39</accession>
<accession>Q5JP40</accession>
<accession>Q5JP42</accession>
<accession>Q5SQI1</accession>
<accession>Q5SU03</accession>
<accession>Q86X42</accession>
<accession>Q8NDK9</accession>
<accession>Q9BRS1</accession>
<accession>Q9H8X5</accession>